<reference key="1">
    <citation type="submission" date="2008-02" db="EMBL/GenBank/DDBJ databases">
        <title>Complete sequence of Yersinia pseudotuberculosis YPIII.</title>
        <authorList>
            <consortium name="US DOE Joint Genome Institute"/>
            <person name="Copeland A."/>
            <person name="Lucas S."/>
            <person name="Lapidus A."/>
            <person name="Glavina del Rio T."/>
            <person name="Dalin E."/>
            <person name="Tice H."/>
            <person name="Bruce D."/>
            <person name="Goodwin L."/>
            <person name="Pitluck S."/>
            <person name="Munk A.C."/>
            <person name="Brettin T."/>
            <person name="Detter J.C."/>
            <person name="Han C."/>
            <person name="Tapia R."/>
            <person name="Schmutz J."/>
            <person name="Larimer F."/>
            <person name="Land M."/>
            <person name="Hauser L."/>
            <person name="Challacombe J.F."/>
            <person name="Green L."/>
            <person name="Lindler L.E."/>
            <person name="Nikolich M.P."/>
            <person name="Richardson P."/>
        </authorList>
    </citation>
    <scope>NUCLEOTIDE SEQUENCE [LARGE SCALE GENOMIC DNA]</scope>
    <source>
        <strain>YPIII</strain>
    </source>
</reference>
<name>RL25_YERPY</name>
<gene>
    <name evidence="1" type="primary">rplY</name>
    <name type="ordered locus">YPK_2795</name>
</gene>
<sequence length="94" mass="10406">MTTINVEVRNDQGKGASRRLRAANKFPAIVYGGSEAAISIALDHDTTKNLELKPGFYDSVLTLVIDGKETKVKVQAVQRHAFKPKLTHIDFVRV</sequence>
<keyword id="KW-0687">Ribonucleoprotein</keyword>
<keyword id="KW-0689">Ribosomal protein</keyword>
<keyword id="KW-0694">RNA-binding</keyword>
<keyword id="KW-0699">rRNA-binding</keyword>
<accession>B1JS45</accession>
<feature type="chain" id="PRO_1000142603" description="Large ribosomal subunit protein bL25">
    <location>
        <begin position="1"/>
        <end position="94"/>
    </location>
</feature>
<evidence type="ECO:0000255" key="1">
    <source>
        <dbReference type="HAMAP-Rule" id="MF_01336"/>
    </source>
</evidence>
<evidence type="ECO:0000305" key="2"/>
<organism>
    <name type="scientific">Yersinia pseudotuberculosis serotype O:3 (strain YPIII)</name>
    <dbReference type="NCBI Taxonomy" id="502800"/>
    <lineage>
        <taxon>Bacteria</taxon>
        <taxon>Pseudomonadati</taxon>
        <taxon>Pseudomonadota</taxon>
        <taxon>Gammaproteobacteria</taxon>
        <taxon>Enterobacterales</taxon>
        <taxon>Yersiniaceae</taxon>
        <taxon>Yersinia</taxon>
    </lineage>
</organism>
<protein>
    <recommendedName>
        <fullName evidence="1">Large ribosomal subunit protein bL25</fullName>
    </recommendedName>
    <alternativeName>
        <fullName evidence="2">50S ribosomal protein L25</fullName>
    </alternativeName>
</protein>
<proteinExistence type="inferred from homology"/>
<dbReference type="EMBL" id="CP000950">
    <property type="protein sequence ID" value="ACA69072.1"/>
    <property type="molecule type" value="Genomic_DNA"/>
</dbReference>
<dbReference type="RefSeq" id="WP_002208834.1">
    <property type="nucleotide sequence ID" value="NZ_CP009792.1"/>
</dbReference>
<dbReference type="SMR" id="B1JS45"/>
<dbReference type="GeneID" id="96664865"/>
<dbReference type="KEGG" id="ypy:YPK_2795"/>
<dbReference type="PATRIC" id="fig|502800.11.peg.3506"/>
<dbReference type="GO" id="GO:0022625">
    <property type="term" value="C:cytosolic large ribosomal subunit"/>
    <property type="evidence" value="ECO:0007669"/>
    <property type="project" value="TreeGrafter"/>
</dbReference>
<dbReference type="GO" id="GO:0008097">
    <property type="term" value="F:5S rRNA binding"/>
    <property type="evidence" value="ECO:0007669"/>
    <property type="project" value="InterPro"/>
</dbReference>
<dbReference type="GO" id="GO:0003735">
    <property type="term" value="F:structural constituent of ribosome"/>
    <property type="evidence" value="ECO:0007669"/>
    <property type="project" value="InterPro"/>
</dbReference>
<dbReference type="GO" id="GO:0006412">
    <property type="term" value="P:translation"/>
    <property type="evidence" value="ECO:0007669"/>
    <property type="project" value="UniProtKB-UniRule"/>
</dbReference>
<dbReference type="CDD" id="cd00495">
    <property type="entry name" value="Ribosomal_L25_TL5_CTC"/>
    <property type="match status" value="1"/>
</dbReference>
<dbReference type="FunFam" id="2.40.240.10:FF:000002">
    <property type="entry name" value="50S ribosomal protein L25"/>
    <property type="match status" value="1"/>
</dbReference>
<dbReference type="Gene3D" id="2.40.240.10">
    <property type="entry name" value="Ribosomal Protein L25, Chain P"/>
    <property type="match status" value="1"/>
</dbReference>
<dbReference type="HAMAP" id="MF_01336">
    <property type="entry name" value="Ribosomal_bL25"/>
    <property type="match status" value="1"/>
</dbReference>
<dbReference type="InterPro" id="IPR020056">
    <property type="entry name" value="Rbsml_bL25/Gln-tRNA_synth_N"/>
</dbReference>
<dbReference type="InterPro" id="IPR011035">
    <property type="entry name" value="Ribosomal_bL25/Gln-tRNA_synth"/>
</dbReference>
<dbReference type="InterPro" id="IPR020055">
    <property type="entry name" value="Ribosomal_bL25_short"/>
</dbReference>
<dbReference type="InterPro" id="IPR029751">
    <property type="entry name" value="Ribosomal_L25_dom"/>
</dbReference>
<dbReference type="InterPro" id="IPR020930">
    <property type="entry name" value="Ribosomal_uL5_bac-type"/>
</dbReference>
<dbReference type="NCBIfam" id="NF004612">
    <property type="entry name" value="PRK05943.1"/>
    <property type="match status" value="1"/>
</dbReference>
<dbReference type="PANTHER" id="PTHR33284">
    <property type="entry name" value="RIBOSOMAL PROTEIN L25/GLN-TRNA SYNTHETASE, ANTI-CODON-BINDING DOMAIN-CONTAINING PROTEIN"/>
    <property type="match status" value="1"/>
</dbReference>
<dbReference type="PANTHER" id="PTHR33284:SF1">
    <property type="entry name" value="RIBOSOMAL PROTEIN L25_GLN-TRNA SYNTHETASE, ANTI-CODON-BINDING DOMAIN-CONTAINING PROTEIN"/>
    <property type="match status" value="1"/>
</dbReference>
<dbReference type="Pfam" id="PF01386">
    <property type="entry name" value="Ribosomal_L25p"/>
    <property type="match status" value="1"/>
</dbReference>
<dbReference type="SUPFAM" id="SSF50715">
    <property type="entry name" value="Ribosomal protein L25-like"/>
    <property type="match status" value="1"/>
</dbReference>
<comment type="function">
    <text evidence="1">This is one of the proteins that binds to the 5S RNA in the ribosome where it forms part of the central protuberance.</text>
</comment>
<comment type="subunit">
    <text evidence="1">Part of the 50S ribosomal subunit; part of the 5S rRNA/L5/L18/L25 subcomplex. Contacts the 5S rRNA. Binds to the 5S rRNA independently of L5 and L18.</text>
</comment>
<comment type="similarity">
    <text evidence="1">Belongs to the bacterial ribosomal protein bL25 family.</text>
</comment>